<proteinExistence type="inferred from homology"/>
<keyword id="KW-0114">cAMP</keyword>
<keyword id="KW-0116">cAMP-binding</keyword>
<keyword id="KW-0547">Nucleotide-binding</keyword>
<keyword id="KW-0597">Phosphoprotein</keyword>
<keyword id="KW-1185">Reference proteome</keyword>
<keyword id="KW-0677">Repeat</keyword>
<dbReference type="EMBL" id="AF317472">
    <property type="protein sequence ID" value="AAG38599.1"/>
    <property type="molecule type" value="Genomic_DNA"/>
</dbReference>
<dbReference type="EMBL" id="CP017624">
    <property type="protein sequence ID" value="AOW27159.1"/>
    <property type="molecule type" value="Genomic_DNA"/>
</dbReference>
<dbReference type="RefSeq" id="XP_719464.2">
    <property type="nucleotide sequence ID" value="XM_714371.2"/>
</dbReference>
<dbReference type="SMR" id="Q9HEW1"/>
<dbReference type="BioGRID" id="1221859">
    <property type="interactions" value="3"/>
</dbReference>
<dbReference type="FunCoup" id="Q9HEW1">
    <property type="interactions" value="464"/>
</dbReference>
<dbReference type="STRING" id="237561.Q9HEW1"/>
<dbReference type="EnsemblFungi" id="C2_01110C_A-T">
    <property type="protein sequence ID" value="C2_01110C_A-T-p1"/>
    <property type="gene ID" value="C2_01110C_A"/>
</dbReference>
<dbReference type="GeneID" id="3638832"/>
<dbReference type="KEGG" id="cal:CAALFM_C201110CA"/>
<dbReference type="CGD" id="CAL0000190895">
    <property type="gene designation" value="BCY1"/>
</dbReference>
<dbReference type="VEuPathDB" id="FungiDB:C2_01110C_A"/>
<dbReference type="eggNOG" id="KOG1113">
    <property type="taxonomic scope" value="Eukaryota"/>
</dbReference>
<dbReference type="HOGENOM" id="CLU_018310_0_1_1"/>
<dbReference type="InParanoid" id="Q9HEW1"/>
<dbReference type="OrthoDB" id="417078at2759"/>
<dbReference type="Proteomes" id="UP000000559">
    <property type="component" value="Chromosome 2"/>
</dbReference>
<dbReference type="GO" id="GO:0005952">
    <property type="term" value="C:cAMP-dependent protein kinase complex"/>
    <property type="evidence" value="ECO:0000318"/>
    <property type="project" value="GO_Central"/>
</dbReference>
<dbReference type="GO" id="GO:0000785">
    <property type="term" value="C:chromatin"/>
    <property type="evidence" value="ECO:0007669"/>
    <property type="project" value="EnsemblFungi"/>
</dbReference>
<dbReference type="GO" id="GO:0005829">
    <property type="term" value="C:cytosol"/>
    <property type="evidence" value="ECO:0000318"/>
    <property type="project" value="GO_Central"/>
</dbReference>
<dbReference type="GO" id="GO:0005634">
    <property type="term" value="C:nucleus"/>
    <property type="evidence" value="ECO:0000314"/>
    <property type="project" value="CGD"/>
</dbReference>
<dbReference type="GO" id="GO:0005886">
    <property type="term" value="C:plasma membrane"/>
    <property type="evidence" value="ECO:0007669"/>
    <property type="project" value="EnsemblFungi"/>
</dbReference>
<dbReference type="GO" id="GO:0030552">
    <property type="term" value="F:cAMP binding"/>
    <property type="evidence" value="ECO:0000318"/>
    <property type="project" value="GO_Central"/>
</dbReference>
<dbReference type="GO" id="GO:0004862">
    <property type="term" value="F:cAMP-dependent protein kinase inhibitor activity"/>
    <property type="evidence" value="ECO:0000318"/>
    <property type="project" value="GO_Central"/>
</dbReference>
<dbReference type="GO" id="GO:0008603">
    <property type="term" value="F:cAMP-dependent protein kinase regulator activity"/>
    <property type="evidence" value="ECO:0000314"/>
    <property type="project" value="CGD"/>
</dbReference>
<dbReference type="GO" id="GO:0042802">
    <property type="term" value="F:identical protein binding"/>
    <property type="evidence" value="ECO:0007669"/>
    <property type="project" value="EnsemblFungi"/>
</dbReference>
<dbReference type="GO" id="GO:0034236">
    <property type="term" value="F:protein kinase A catalytic subunit binding"/>
    <property type="evidence" value="ECO:0000318"/>
    <property type="project" value="GO_Central"/>
</dbReference>
<dbReference type="GO" id="GO:0007189">
    <property type="term" value="P:adenylate cyclase-activating G protein-coupled receptor signaling pathway"/>
    <property type="evidence" value="ECO:0000318"/>
    <property type="project" value="GO_Central"/>
</dbReference>
<dbReference type="GO" id="GO:0042149">
    <property type="term" value="P:cellular response to glucose starvation"/>
    <property type="evidence" value="ECO:0007669"/>
    <property type="project" value="EnsemblFungi"/>
</dbReference>
<dbReference type="GO" id="GO:0034605">
    <property type="term" value="P:cellular response to heat"/>
    <property type="evidence" value="ECO:0000315"/>
    <property type="project" value="CGD"/>
</dbReference>
<dbReference type="GO" id="GO:0006995">
    <property type="term" value="P:cellular response to nitrogen starvation"/>
    <property type="evidence" value="ECO:0007669"/>
    <property type="project" value="EnsemblFungi"/>
</dbReference>
<dbReference type="GO" id="GO:0009267">
    <property type="term" value="P:cellular response to starvation"/>
    <property type="evidence" value="ECO:0000315"/>
    <property type="project" value="CGD"/>
</dbReference>
<dbReference type="GO" id="GO:0030447">
    <property type="term" value="P:filamentous growth"/>
    <property type="evidence" value="ECO:0000315"/>
    <property type="project" value="CGD"/>
</dbReference>
<dbReference type="GO" id="GO:0060258">
    <property type="term" value="P:negative regulation of filamentous growth"/>
    <property type="evidence" value="ECO:0000315"/>
    <property type="project" value="CGD"/>
</dbReference>
<dbReference type="GO" id="GO:0046580">
    <property type="term" value="P:negative regulation of Ras protein signal transduction"/>
    <property type="evidence" value="ECO:0007669"/>
    <property type="project" value="EnsemblFungi"/>
</dbReference>
<dbReference type="GO" id="GO:0045944">
    <property type="term" value="P:positive regulation of transcription by RNA polymerase II"/>
    <property type="evidence" value="ECO:0007669"/>
    <property type="project" value="EnsemblFungi"/>
</dbReference>
<dbReference type="GO" id="GO:0097271">
    <property type="term" value="P:protein localization to bud neck"/>
    <property type="evidence" value="ECO:0007669"/>
    <property type="project" value="EnsemblFungi"/>
</dbReference>
<dbReference type="GO" id="GO:0010603">
    <property type="term" value="P:regulation of cytoplasmic mRNA processing body assembly"/>
    <property type="evidence" value="ECO:0007669"/>
    <property type="project" value="EnsemblFungi"/>
</dbReference>
<dbReference type="CDD" id="cd00038">
    <property type="entry name" value="CAP_ED"/>
    <property type="match status" value="2"/>
</dbReference>
<dbReference type="CDD" id="cd12098">
    <property type="entry name" value="DD_R_ScPKA-like"/>
    <property type="match status" value="1"/>
</dbReference>
<dbReference type="FunFam" id="2.60.120.10:FF:000039">
    <property type="entry name" value="cAMP-dependent protein kinase regulatory subunit"/>
    <property type="match status" value="1"/>
</dbReference>
<dbReference type="FunFam" id="2.60.120.10:FF:000118">
    <property type="entry name" value="cAMP-dependent protein kinase regulatory subunit"/>
    <property type="match status" value="1"/>
</dbReference>
<dbReference type="Gene3D" id="1.20.890.10">
    <property type="entry name" value="cAMP-dependent protein kinase regulatory subunit, dimerization-anchoring domain"/>
    <property type="match status" value="1"/>
</dbReference>
<dbReference type="Gene3D" id="2.60.120.10">
    <property type="entry name" value="Jelly Rolls"/>
    <property type="match status" value="2"/>
</dbReference>
<dbReference type="InterPro" id="IPR050503">
    <property type="entry name" value="cAMP-dep_PK_reg_su-like"/>
</dbReference>
<dbReference type="InterPro" id="IPR012198">
    <property type="entry name" value="cAMP_dep_PK_reg_su"/>
</dbReference>
<dbReference type="InterPro" id="IPR003117">
    <property type="entry name" value="cAMP_dep_PK_reg_su_I/II_a/b"/>
</dbReference>
<dbReference type="InterPro" id="IPR018488">
    <property type="entry name" value="cNMP-bd_CS"/>
</dbReference>
<dbReference type="InterPro" id="IPR000595">
    <property type="entry name" value="cNMP-bd_dom"/>
</dbReference>
<dbReference type="InterPro" id="IPR018490">
    <property type="entry name" value="cNMP-bd_dom_sf"/>
</dbReference>
<dbReference type="InterPro" id="IPR014710">
    <property type="entry name" value="RmlC-like_jellyroll"/>
</dbReference>
<dbReference type="PANTHER" id="PTHR11635">
    <property type="entry name" value="CAMP-DEPENDENT PROTEIN KINASE REGULATORY CHAIN"/>
    <property type="match status" value="1"/>
</dbReference>
<dbReference type="PANTHER" id="PTHR11635:SF152">
    <property type="entry name" value="CAMP-DEPENDENT PROTEIN KINASE TYPE I REGULATORY SUBUNIT-RELATED"/>
    <property type="match status" value="1"/>
</dbReference>
<dbReference type="Pfam" id="PF00027">
    <property type="entry name" value="cNMP_binding"/>
    <property type="match status" value="2"/>
</dbReference>
<dbReference type="Pfam" id="PF02197">
    <property type="entry name" value="RIIa"/>
    <property type="match status" value="1"/>
</dbReference>
<dbReference type="PIRSF" id="PIRSF000548">
    <property type="entry name" value="PK_regulatory"/>
    <property type="match status" value="1"/>
</dbReference>
<dbReference type="PRINTS" id="PR00103">
    <property type="entry name" value="CAMPKINASE"/>
</dbReference>
<dbReference type="SMART" id="SM00100">
    <property type="entry name" value="cNMP"/>
    <property type="match status" value="2"/>
</dbReference>
<dbReference type="SMART" id="SM00394">
    <property type="entry name" value="RIIa"/>
    <property type="match status" value="1"/>
</dbReference>
<dbReference type="SUPFAM" id="SSF51206">
    <property type="entry name" value="cAMP-binding domain-like"/>
    <property type="match status" value="2"/>
</dbReference>
<dbReference type="SUPFAM" id="SSF47391">
    <property type="entry name" value="Dimerization-anchoring domain of cAMP-dependent PK regulatory subunit"/>
    <property type="match status" value="1"/>
</dbReference>
<dbReference type="PROSITE" id="PS00888">
    <property type="entry name" value="CNMP_BINDING_1"/>
    <property type="match status" value="2"/>
</dbReference>
<dbReference type="PROSITE" id="PS00889">
    <property type="entry name" value="CNMP_BINDING_2"/>
    <property type="match status" value="2"/>
</dbReference>
<dbReference type="PROSITE" id="PS50042">
    <property type="entry name" value="CNMP_BINDING_3"/>
    <property type="match status" value="2"/>
</dbReference>
<comment type="subunit">
    <text evidence="1">Tetramer, composed of 2 regulatory (R) and 2 catalytic (C) subunits. In the presence of cAMP it dissociates into 2 active monomeric C subunits and an R dimer (By similarity).</text>
</comment>
<comment type="similarity">
    <text evidence="4">Belongs to the cAMP-dependent kinase regulatory chain family.</text>
</comment>
<protein>
    <recommendedName>
        <fullName>cAMP-dependent protein kinase regulatory subunit</fullName>
        <shortName>PKA regulatory subunit</shortName>
        <shortName>PKA-R</shortName>
    </recommendedName>
</protein>
<sequence length="459" mass="50306">MSNPQQQFISDELSQLQKEIISKNPQDVLQFCANYFNTKLQAQRSELWSQQAKAEAAGIDLFPSVDHVNVNSSGVSIVNDRQPSFKSPFGVNDPHSNHDEDPHAKDTKTDTAAAAVGGGIFKSNFDVKKSASNPPTKEVDPDDPSKPSSSSQPNQQSASASSKTPSSKIPVAFNANRRTSVSAEALNPAKLKLDSWKPPVNNLSITEEETLANNLKNNFLFKQLDANSKKTVIAALQQKSFAKDTVIIQQGDEGDFFYIIETGTVDFYVNDAKVSSSSEGSSFGELALMYNSPRAATAVAATDVVCWALDRLTFRRILLEGTFNKRLMYEDFLKDIEVLKSLSDHARSKLADALSTEMYHKGDKIVTEGEQGENFYLIESGNCQVYNEKLGNIKQLTKGDYFGELALIKDLPRQATVEALDNVIVATLGKSGFQRLLGPVVEVLKEQDPTKSQDPTAGH</sequence>
<feature type="chain" id="PRO_0000205404" description="cAMP-dependent protein kinase regulatory subunit">
    <location>
        <begin position="1"/>
        <end position="459"/>
    </location>
</feature>
<feature type="region of interest" description="Dimerization and phosphorylation" evidence="2">
    <location>
        <begin position="30"/>
        <end position="219"/>
    </location>
</feature>
<feature type="region of interest" description="Disordered" evidence="3">
    <location>
        <begin position="78"/>
        <end position="109"/>
    </location>
</feature>
<feature type="region of interest" description="Disordered" evidence="3">
    <location>
        <begin position="125"/>
        <end position="168"/>
    </location>
</feature>
<feature type="compositionally biased region" description="Basic and acidic residues" evidence="3">
    <location>
        <begin position="95"/>
        <end position="109"/>
    </location>
</feature>
<feature type="compositionally biased region" description="Low complexity" evidence="3">
    <location>
        <begin position="146"/>
        <end position="168"/>
    </location>
</feature>
<feature type="binding site">
    <location>
        <begin position="220"/>
        <end position="335"/>
    </location>
    <ligand>
        <name>3',5'-cyclic AMP</name>
        <dbReference type="ChEBI" id="CHEBI:58165"/>
        <label>1</label>
    </ligand>
</feature>
<feature type="binding site" evidence="1">
    <location>
        <position position="285"/>
    </location>
    <ligand>
        <name>3',5'-cyclic AMP</name>
        <dbReference type="ChEBI" id="CHEBI:58165"/>
        <label>1</label>
    </ligand>
</feature>
<feature type="binding site" evidence="1">
    <location>
        <position position="294"/>
    </location>
    <ligand>
        <name>3',5'-cyclic AMP</name>
        <dbReference type="ChEBI" id="CHEBI:58165"/>
        <label>1</label>
    </ligand>
</feature>
<feature type="binding site">
    <location>
        <begin position="338"/>
        <end position="454"/>
    </location>
    <ligand>
        <name>3',5'-cyclic AMP</name>
        <dbReference type="ChEBI" id="CHEBI:58165"/>
        <label>2</label>
    </ligand>
</feature>
<feature type="binding site" evidence="1">
    <location>
        <position position="404"/>
    </location>
    <ligand>
        <name>3',5'-cyclic AMP</name>
        <dbReference type="ChEBI" id="CHEBI:58165"/>
        <label>2</label>
    </ligand>
</feature>
<feature type="binding site" evidence="1">
    <location>
        <position position="413"/>
    </location>
    <ligand>
        <name>3',5'-cyclic AMP</name>
        <dbReference type="ChEBI" id="CHEBI:58165"/>
        <label>2</label>
    </ligand>
</feature>
<feature type="modified residue" description="Phosphoserine" evidence="1">
    <location>
        <position position="180"/>
    </location>
</feature>
<organism>
    <name type="scientific">Candida albicans (strain SC5314 / ATCC MYA-2876)</name>
    <name type="common">Yeast</name>
    <dbReference type="NCBI Taxonomy" id="237561"/>
    <lineage>
        <taxon>Eukaryota</taxon>
        <taxon>Fungi</taxon>
        <taxon>Dikarya</taxon>
        <taxon>Ascomycota</taxon>
        <taxon>Saccharomycotina</taxon>
        <taxon>Pichiomycetes</taxon>
        <taxon>Debaryomycetaceae</taxon>
        <taxon>Candida/Lodderomyces clade</taxon>
        <taxon>Candida</taxon>
    </lineage>
</organism>
<evidence type="ECO:0000250" key="1"/>
<evidence type="ECO:0000255" key="2"/>
<evidence type="ECO:0000256" key="3">
    <source>
        <dbReference type="SAM" id="MobiDB-lite"/>
    </source>
</evidence>
<evidence type="ECO:0000305" key="4"/>
<name>KAPR_CANAL</name>
<gene>
    <name type="primary">BCY1</name>
    <name type="synonym">PKAR</name>
    <name type="ordered locus">CAALFM_C201110CA</name>
    <name type="ORF">CaO19.9565</name>
</gene>
<reference key="1">
    <citation type="journal article" date="2004" name="Eukaryot. Cell">
        <title>Candida albicans lacking the gene encoding the regulatory subunit of protein kinase A displays a defect in hyphal formation and an altered localization of the catalytic subunit.</title>
        <authorList>
            <person name="Cassola A."/>
            <person name="Parrot M."/>
            <person name="Silberstein S."/>
            <person name="Magee B.B."/>
            <person name="Passeron S."/>
            <person name="Giasson L."/>
            <person name="Cantore M.L."/>
        </authorList>
    </citation>
    <scope>NUCLEOTIDE SEQUENCE [GENOMIC DNA]</scope>
    <source>
        <strain>SC5314 / CAI4 / ATCC MYA-682</strain>
    </source>
</reference>
<reference key="2">
    <citation type="journal article" date="2004" name="Proc. Natl. Acad. Sci. U.S.A.">
        <title>The diploid genome sequence of Candida albicans.</title>
        <authorList>
            <person name="Jones T."/>
            <person name="Federspiel N.A."/>
            <person name="Chibana H."/>
            <person name="Dungan J."/>
            <person name="Kalman S."/>
            <person name="Magee B.B."/>
            <person name="Newport G."/>
            <person name="Thorstenson Y.R."/>
            <person name="Agabian N."/>
            <person name="Magee P.T."/>
            <person name="Davis R.W."/>
            <person name="Scherer S."/>
        </authorList>
    </citation>
    <scope>NUCLEOTIDE SEQUENCE [LARGE SCALE GENOMIC DNA]</scope>
    <source>
        <strain>SC5314 / ATCC MYA-2876</strain>
    </source>
</reference>
<reference key="3">
    <citation type="journal article" date="2007" name="Genome Biol.">
        <title>Assembly of the Candida albicans genome into sixteen supercontigs aligned on the eight chromosomes.</title>
        <authorList>
            <person name="van het Hoog M."/>
            <person name="Rast T.J."/>
            <person name="Martchenko M."/>
            <person name="Grindle S."/>
            <person name="Dignard D."/>
            <person name="Hogues H."/>
            <person name="Cuomo C."/>
            <person name="Berriman M."/>
            <person name="Scherer S."/>
            <person name="Magee B.B."/>
            <person name="Whiteway M."/>
            <person name="Chibana H."/>
            <person name="Nantel A."/>
            <person name="Magee P.T."/>
        </authorList>
    </citation>
    <scope>GENOME REANNOTATION</scope>
    <source>
        <strain>SC5314 / ATCC MYA-2876</strain>
    </source>
</reference>
<reference key="4">
    <citation type="journal article" date="2013" name="Genome Biol.">
        <title>Assembly of a phased diploid Candida albicans genome facilitates allele-specific measurements and provides a simple model for repeat and indel structure.</title>
        <authorList>
            <person name="Muzzey D."/>
            <person name="Schwartz K."/>
            <person name="Weissman J.S."/>
            <person name="Sherlock G."/>
        </authorList>
    </citation>
    <scope>NUCLEOTIDE SEQUENCE [LARGE SCALE GENOMIC DNA]</scope>
    <scope>GENOME REANNOTATION</scope>
    <source>
        <strain>SC5314 / ATCC MYA-2876</strain>
    </source>
</reference>
<accession>Q9HEW1</accession>
<accession>A0A1D8PG99</accession>
<accession>Q5ADI2</accession>